<keyword id="KW-0325">Glycoprotein</keyword>
<keyword id="KW-0472">Membrane</keyword>
<keyword id="KW-1185">Reference proteome</keyword>
<keyword id="KW-0732">Signal</keyword>
<keyword id="KW-0812">Transmembrane</keyword>
<keyword id="KW-1133">Transmembrane helix</keyword>
<sequence length="553" mass="61071">MIKINKILSLLIILLIINCNYQFVKADAESKALDIINRYRDIARYTFFTTDGHLEKYPSGFCGGTTIEDCKWDEYIEAVILLSGITFIIAAITLIFGIIFWIFRCLCFGGCKPTHGILCPGPKYDPDIGEGYSKGRVFILKLVTLIMVAGCVAVFITSLKGNSSVTSGINNLSDTVFNKTSYTLEQLIEISNQLNETKYQQFDQKQEIQSQLTQLISDGEELESKGEDISSNAKDINNIRTKIIIVGLVFCMVVAGLIGVSALIGLPRISRAASIALVILIPFMWIVFSVHYPINSVVADICISYDTTGVQQLSNFTNPIIEQVFEGCQNDNNTISVFEDLQSLVNNLLQNATDTSCDKINDACQLAFPRYPNDNPLSVPYQQNVLDCPPTLTCSNTTLSIYLFNTTVHDFNVKCKNAPTCGDLSTCDPSILTEVMSCDWVDVSSVNSCSQGGCQYNQQVVNTTKQIMQLYDILTSLTTLWTDKVVPLIKCSYLMPFIDEVQNIVCVDEVNSLDLLIAPTAVFAILLTGLGITGILGSKRFNSKYRVKGSRSA</sequence>
<accession>Q54DS3</accession>
<protein>
    <recommendedName>
        <fullName>Transmembrane protein DDB_G0292058</fullName>
    </recommendedName>
</protein>
<name>Y2058_DICDI</name>
<evidence type="ECO:0000255" key="1"/>
<evidence type="ECO:0000269" key="2">
    <source>
    </source>
</evidence>
<evidence type="ECO:0000305" key="3"/>
<reference key="1">
    <citation type="journal article" date="2005" name="Nature">
        <title>The genome of the social amoeba Dictyostelium discoideum.</title>
        <authorList>
            <person name="Eichinger L."/>
            <person name="Pachebat J.A."/>
            <person name="Gloeckner G."/>
            <person name="Rajandream M.A."/>
            <person name="Sucgang R."/>
            <person name="Berriman M."/>
            <person name="Song J."/>
            <person name="Olsen R."/>
            <person name="Szafranski K."/>
            <person name="Xu Q."/>
            <person name="Tunggal B."/>
            <person name="Kummerfeld S."/>
            <person name="Madera M."/>
            <person name="Konfortov B.A."/>
            <person name="Rivero F."/>
            <person name="Bankier A.T."/>
            <person name="Lehmann R."/>
            <person name="Hamlin N."/>
            <person name="Davies R."/>
            <person name="Gaudet P."/>
            <person name="Fey P."/>
            <person name="Pilcher K."/>
            <person name="Chen G."/>
            <person name="Saunders D."/>
            <person name="Sodergren E.J."/>
            <person name="Davis P."/>
            <person name="Kerhornou A."/>
            <person name="Nie X."/>
            <person name="Hall N."/>
            <person name="Anjard C."/>
            <person name="Hemphill L."/>
            <person name="Bason N."/>
            <person name="Farbrother P."/>
            <person name="Desany B."/>
            <person name="Just E."/>
            <person name="Morio T."/>
            <person name="Rost R."/>
            <person name="Churcher C.M."/>
            <person name="Cooper J."/>
            <person name="Haydock S."/>
            <person name="van Driessche N."/>
            <person name="Cronin A."/>
            <person name="Goodhead I."/>
            <person name="Muzny D.M."/>
            <person name="Mourier T."/>
            <person name="Pain A."/>
            <person name="Lu M."/>
            <person name="Harper D."/>
            <person name="Lindsay R."/>
            <person name="Hauser H."/>
            <person name="James K.D."/>
            <person name="Quiles M."/>
            <person name="Madan Babu M."/>
            <person name="Saito T."/>
            <person name="Buchrieser C."/>
            <person name="Wardroper A."/>
            <person name="Felder M."/>
            <person name="Thangavelu M."/>
            <person name="Johnson D."/>
            <person name="Knights A."/>
            <person name="Loulseged H."/>
            <person name="Mungall K.L."/>
            <person name="Oliver K."/>
            <person name="Price C."/>
            <person name="Quail M.A."/>
            <person name="Urushihara H."/>
            <person name="Hernandez J."/>
            <person name="Rabbinowitsch E."/>
            <person name="Steffen D."/>
            <person name="Sanders M."/>
            <person name="Ma J."/>
            <person name="Kohara Y."/>
            <person name="Sharp S."/>
            <person name="Simmonds M.N."/>
            <person name="Spiegler S."/>
            <person name="Tivey A."/>
            <person name="Sugano S."/>
            <person name="White B."/>
            <person name="Walker D."/>
            <person name="Woodward J.R."/>
            <person name="Winckler T."/>
            <person name="Tanaka Y."/>
            <person name="Shaulsky G."/>
            <person name="Schleicher M."/>
            <person name="Weinstock G.M."/>
            <person name="Rosenthal A."/>
            <person name="Cox E.C."/>
            <person name="Chisholm R.L."/>
            <person name="Gibbs R.A."/>
            <person name="Loomis W.F."/>
            <person name="Platzer M."/>
            <person name="Kay R.R."/>
            <person name="Williams J.G."/>
            <person name="Dear P.H."/>
            <person name="Noegel A.A."/>
            <person name="Barrell B.G."/>
            <person name="Kuspa A."/>
        </authorList>
    </citation>
    <scope>NUCLEOTIDE SEQUENCE [LARGE SCALE GENOMIC DNA]</scope>
    <source>
        <strain>AX4</strain>
    </source>
</reference>
<reference key="2">
    <citation type="journal article" date="2003" name="Mech. Dev.">
        <title>Construction of a gamete-enriched gene pool and RNAi-mediated functional analysis in Dictyostelium discoideum.</title>
        <authorList>
            <person name="Muramoto T."/>
            <person name="Suzuki K."/>
            <person name="Shimizu H."/>
            <person name="Kohara Y."/>
            <person name="Kohriki E."/>
            <person name="Obara S."/>
            <person name="Tanaka Y."/>
            <person name="Urushihara H."/>
        </authorList>
    </citation>
    <scope>DEVELOPMENTAL STAGE [LARGE SCALE ANALYSIS]</scope>
</reference>
<feature type="signal peptide" evidence="1">
    <location>
        <begin position="1"/>
        <end position="26"/>
    </location>
</feature>
<feature type="chain" id="PRO_0000393119" description="Transmembrane protein DDB_G0292058">
    <location>
        <begin position="27"/>
        <end position="553"/>
    </location>
</feature>
<feature type="transmembrane region" description="Helical" evidence="1">
    <location>
        <begin position="80"/>
        <end position="100"/>
    </location>
</feature>
<feature type="transmembrane region" description="Helical" evidence="1">
    <location>
        <begin position="137"/>
        <end position="157"/>
    </location>
</feature>
<feature type="transmembrane region" description="Helical" evidence="1">
    <location>
        <begin position="243"/>
        <end position="263"/>
    </location>
</feature>
<feature type="transmembrane region" description="Helical" evidence="1">
    <location>
        <begin position="274"/>
        <end position="294"/>
    </location>
</feature>
<feature type="transmembrane region" description="Helical" evidence="1">
    <location>
        <begin position="515"/>
        <end position="535"/>
    </location>
</feature>
<feature type="glycosylation site" description="N-linked (GlcNAc...) asparagine" evidence="1">
    <location>
        <position position="162"/>
    </location>
</feature>
<feature type="glycosylation site" description="N-linked (GlcNAc...) asparagine" evidence="1">
    <location>
        <position position="171"/>
    </location>
</feature>
<feature type="glycosylation site" description="N-linked (GlcNAc...) asparagine" evidence="1">
    <location>
        <position position="178"/>
    </location>
</feature>
<feature type="glycosylation site" description="N-linked (GlcNAc...) asparagine" evidence="1">
    <location>
        <position position="195"/>
    </location>
</feature>
<feature type="glycosylation site" description="N-linked (GlcNAc...) asparagine" evidence="1">
    <location>
        <position position="315"/>
    </location>
</feature>
<feature type="glycosylation site" description="N-linked (GlcNAc...) asparagine" evidence="1">
    <location>
        <position position="332"/>
    </location>
</feature>
<feature type="glycosylation site" description="N-linked (GlcNAc...) asparagine" evidence="1">
    <location>
        <position position="351"/>
    </location>
</feature>
<feature type="glycosylation site" description="N-linked (GlcNAc...) asparagine" evidence="1">
    <location>
        <position position="396"/>
    </location>
</feature>
<feature type="glycosylation site" description="N-linked (GlcNAc...) asparagine" evidence="1">
    <location>
        <position position="405"/>
    </location>
</feature>
<feature type="glycosylation site" description="N-linked (GlcNAc...) asparagine" evidence="1">
    <location>
        <position position="462"/>
    </location>
</feature>
<gene>
    <name type="ORF">DDB_G0292058</name>
</gene>
<proteinExistence type="evidence at transcript level"/>
<organism>
    <name type="scientific">Dictyostelium discoideum</name>
    <name type="common">Social amoeba</name>
    <dbReference type="NCBI Taxonomy" id="44689"/>
    <lineage>
        <taxon>Eukaryota</taxon>
        <taxon>Amoebozoa</taxon>
        <taxon>Evosea</taxon>
        <taxon>Eumycetozoa</taxon>
        <taxon>Dictyostelia</taxon>
        <taxon>Dictyosteliales</taxon>
        <taxon>Dictyosteliaceae</taxon>
        <taxon>Dictyostelium</taxon>
    </lineage>
</organism>
<dbReference type="EMBL" id="AAFI02000187">
    <property type="protein sequence ID" value="EAL61385.1"/>
    <property type="molecule type" value="Genomic_DNA"/>
</dbReference>
<dbReference type="RefSeq" id="XP_629799.1">
    <property type="nucleotide sequence ID" value="XM_629797.1"/>
</dbReference>
<dbReference type="SMR" id="Q54DS3"/>
<dbReference type="GlyGen" id="Q54DS3">
    <property type="glycosylation" value="10 sites"/>
</dbReference>
<dbReference type="PaxDb" id="44689-DDB0232106"/>
<dbReference type="EnsemblProtists" id="EAL61385">
    <property type="protein sequence ID" value="EAL61385"/>
    <property type="gene ID" value="DDB_G0292058"/>
</dbReference>
<dbReference type="GeneID" id="8628477"/>
<dbReference type="KEGG" id="ddi:DDB_G0292058"/>
<dbReference type="dictyBase" id="DDB_G0292058"/>
<dbReference type="VEuPathDB" id="AmoebaDB:DDB_G0292058"/>
<dbReference type="eggNOG" id="ENOG502RBB3">
    <property type="taxonomic scope" value="Eukaryota"/>
</dbReference>
<dbReference type="HOGENOM" id="CLU_492987_0_0_1"/>
<dbReference type="InParanoid" id="Q54DS3"/>
<dbReference type="OMA" id="FYYIDYS"/>
<dbReference type="PhylomeDB" id="Q54DS3"/>
<dbReference type="PRO" id="PR:Q54DS3"/>
<dbReference type="Proteomes" id="UP000002195">
    <property type="component" value="Chromosome 6"/>
</dbReference>
<dbReference type="GO" id="GO:0016020">
    <property type="term" value="C:membrane"/>
    <property type="evidence" value="ECO:0007669"/>
    <property type="project" value="UniProtKB-SubCell"/>
</dbReference>
<dbReference type="InterPro" id="IPR040283">
    <property type="entry name" value="DDB_G0292058-like"/>
</dbReference>
<dbReference type="PANTHER" id="PTHR31414">
    <property type="entry name" value="TRANSMEMBRANE PROTEIN DDB_G0292058"/>
    <property type="match status" value="1"/>
</dbReference>
<dbReference type="PANTHER" id="PTHR31414:SF18">
    <property type="entry name" value="TRANSMEMBRANE PROTEIN-RELATED"/>
    <property type="match status" value="1"/>
</dbReference>
<comment type="subcellular location">
    <subcellularLocation>
        <location evidence="3">Membrane</location>
        <topology evidence="3">Multi-pass membrane protein</topology>
    </subcellularLocation>
</comment>
<comment type="developmental stage">
    <text evidence="2">Highly enriched in gametes.</text>
</comment>